<evidence type="ECO:0000255" key="1">
    <source>
        <dbReference type="HAMAP-Rule" id="MF_00036"/>
    </source>
</evidence>
<organism>
    <name type="scientific">Anaplasma marginale (strain St. Maries)</name>
    <dbReference type="NCBI Taxonomy" id="234826"/>
    <lineage>
        <taxon>Bacteria</taxon>
        <taxon>Pseudomonadati</taxon>
        <taxon>Pseudomonadota</taxon>
        <taxon>Alphaproteobacteria</taxon>
        <taxon>Rickettsiales</taxon>
        <taxon>Anaplasmataceae</taxon>
        <taxon>Anaplasma</taxon>
    </lineage>
</organism>
<reference key="1">
    <citation type="journal article" date="2005" name="Proc. Natl. Acad. Sci. U.S.A.">
        <title>Complete genome sequencing of Anaplasma marginale reveals that the surface is skewed to two superfamilies of outer membrane proteins.</title>
        <authorList>
            <person name="Brayton K.A."/>
            <person name="Kappmeyer L.S."/>
            <person name="Herndon D.R."/>
            <person name="Dark M.J."/>
            <person name="Tibbals D.L."/>
            <person name="Palmer G.H."/>
            <person name="McGuire T.C."/>
            <person name="Knowles D.P. Jr."/>
        </authorList>
    </citation>
    <scope>NUCLEOTIDE SEQUENCE [LARGE SCALE GENOMIC DNA]</scope>
    <source>
        <strain>St. Maries</strain>
    </source>
</reference>
<proteinExistence type="inferred from homology"/>
<name>SYA_ANAMM</name>
<feature type="chain" id="PRO_0000075046" description="Alanine--tRNA ligase">
    <location>
        <begin position="1"/>
        <end position="882"/>
    </location>
</feature>
<feature type="binding site" evidence="1">
    <location>
        <position position="576"/>
    </location>
    <ligand>
        <name>Zn(2+)</name>
        <dbReference type="ChEBI" id="CHEBI:29105"/>
    </ligand>
</feature>
<feature type="binding site" evidence="1">
    <location>
        <position position="580"/>
    </location>
    <ligand>
        <name>Zn(2+)</name>
        <dbReference type="ChEBI" id="CHEBI:29105"/>
    </ligand>
</feature>
<feature type="binding site" evidence="1">
    <location>
        <position position="678"/>
    </location>
    <ligand>
        <name>Zn(2+)</name>
        <dbReference type="ChEBI" id="CHEBI:29105"/>
    </ligand>
</feature>
<feature type="binding site" evidence="1">
    <location>
        <position position="682"/>
    </location>
    <ligand>
        <name>Zn(2+)</name>
        <dbReference type="ChEBI" id="CHEBI:29105"/>
    </ligand>
</feature>
<keyword id="KW-0030">Aminoacyl-tRNA synthetase</keyword>
<keyword id="KW-0067">ATP-binding</keyword>
<keyword id="KW-0963">Cytoplasm</keyword>
<keyword id="KW-0436">Ligase</keyword>
<keyword id="KW-0479">Metal-binding</keyword>
<keyword id="KW-0547">Nucleotide-binding</keyword>
<keyword id="KW-0648">Protein biosynthesis</keyword>
<keyword id="KW-0694">RNA-binding</keyword>
<keyword id="KW-0820">tRNA-binding</keyword>
<keyword id="KW-0862">Zinc</keyword>
<gene>
    <name evidence="1" type="primary">alaS</name>
    <name type="ordered locus">AM224</name>
</gene>
<sequence length="882" mass="95968">MSSGSLSSIRKKFLEFFVKNGHKLYASAPLVATGDASLLFTSAGMVPFKQAFTSGSSVDGAKTAVSSQKCLRAGGKHNDLENVGYTNRHHTFFEMLGNFSFGDYFKERAIELAWRFVTEEMCLSKDRLWITVYSEDQEAFDIWKKITGFPDDRIIKISTSDNFWSMGDTGPCGPCSEIFYDYGEHVQGGPPGSKDADGPRFTEVWNLVFMQFCRDEHGELNPLPHKCIDTGMGLERAAAVVQGVCDNYDTDLFKAVIRKSQDVFGSPDNSIAHRVIADHIRAAAFLISEGLSPGNEGRNYVLRRIIRRAVRYAYQLDPSNVAIHEVLPVLTKEGSAGYMGDAYPELVRCEQSITSTLRSEGEGFVDTLRRGMALLEKEIGGLSPGQVLLGDVAFKLYDTFGFPLDITLDIAKERGLKFDQEGFNKGMGEQKARSRKHWVGSGEDASHRLWEELQAQHKNTRFVGYDCCSTKASVLSITRDGMAVQSVNSGEKACLLLDVSPFYAESGGQEGDKGSITGVSGVKNSGGANIAEVTYTRKASNLHIHECTITSGVFNVGDTVDAAIDVDRRERLKANHSATHILHSVLRTHIDGNIQQKGSLVAEDKLRFDFNYASALTKEQIALIEREVNRRIMSNKPVLTDHCSFEAAVQGGAIALFGEKYSEHSVRVVSMGDSKELCGGTHVRYTGDIGAFKIVSESGIALGVRRIEAITGQSVVDGLRKDGDILLHISERLGVPVGEVSEGLERLLKEKLELKKKLVCAWHEIIKSSISPVNCGAGVVLHCGYFPTIPVDAIMEFMKSARKAERGIFAIATAVDGKAVLIIGVGDTASKVLGASELVKTLADLQGKGGGNAGLARVSLEVGNVQEALSTILNKVTAAFPT</sequence>
<protein>
    <recommendedName>
        <fullName evidence="1">Alanine--tRNA ligase</fullName>
        <ecNumber evidence="1">6.1.1.7</ecNumber>
    </recommendedName>
    <alternativeName>
        <fullName evidence="1">Alanyl-tRNA synthetase</fullName>
        <shortName evidence="1">AlaRS</shortName>
    </alternativeName>
</protein>
<dbReference type="EC" id="6.1.1.7" evidence="1"/>
<dbReference type="EMBL" id="CP000030">
    <property type="protein sequence ID" value="AAV86339.1"/>
    <property type="molecule type" value="Genomic_DNA"/>
</dbReference>
<dbReference type="RefSeq" id="WP_011114172.1">
    <property type="nucleotide sequence ID" value="NC_004842.2"/>
</dbReference>
<dbReference type="SMR" id="Q5PBJ0"/>
<dbReference type="KEGG" id="ama:AM224"/>
<dbReference type="HOGENOM" id="CLU_004485_1_1_5"/>
<dbReference type="GO" id="GO:0005829">
    <property type="term" value="C:cytosol"/>
    <property type="evidence" value="ECO:0007669"/>
    <property type="project" value="TreeGrafter"/>
</dbReference>
<dbReference type="GO" id="GO:0004813">
    <property type="term" value="F:alanine-tRNA ligase activity"/>
    <property type="evidence" value="ECO:0007669"/>
    <property type="project" value="UniProtKB-UniRule"/>
</dbReference>
<dbReference type="GO" id="GO:0002161">
    <property type="term" value="F:aminoacyl-tRNA deacylase activity"/>
    <property type="evidence" value="ECO:0007669"/>
    <property type="project" value="TreeGrafter"/>
</dbReference>
<dbReference type="GO" id="GO:0005524">
    <property type="term" value="F:ATP binding"/>
    <property type="evidence" value="ECO:0007669"/>
    <property type="project" value="UniProtKB-UniRule"/>
</dbReference>
<dbReference type="GO" id="GO:0000049">
    <property type="term" value="F:tRNA binding"/>
    <property type="evidence" value="ECO:0007669"/>
    <property type="project" value="UniProtKB-KW"/>
</dbReference>
<dbReference type="GO" id="GO:0008270">
    <property type="term" value="F:zinc ion binding"/>
    <property type="evidence" value="ECO:0007669"/>
    <property type="project" value="UniProtKB-UniRule"/>
</dbReference>
<dbReference type="GO" id="GO:0006419">
    <property type="term" value="P:alanyl-tRNA aminoacylation"/>
    <property type="evidence" value="ECO:0007669"/>
    <property type="project" value="UniProtKB-UniRule"/>
</dbReference>
<dbReference type="GO" id="GO:0045892">
    <property type="term" value="P:negative regulation of DNA-templated transcription"/>
    <property type="evidence" value="ECO:0007669"/>
    <property type="project" value="TreeGrafter"/>
</dbReference>
<dbReference type="CDD" id="cd00673">
    <property type="entry name" value="AlaRS_core"/>
    <property type="match status" value="1"/>
</dbReference>
<dbReference type="FunFam" id="3.30.930.10:FF:000004">
    <property type="entry name" value="Alanine--tRNA ligase"/>
    <property type="match status" value="1"/>
</dbReference>
<dbReference type="FunFam" id="3.30.980.10:FF:000004">
    <property type="entry name" value="Alanine--tRNA ligase, cytoplasmic"/>
    <property type="match status" value="1"/>
</dbReference>
<dbReference type="Gene3D" id="2.40.30.130">
    <property type="match status" value="1"/>
</dbReference>
<dbReference type="Gene3D" id="3.10.310.40">
    <property type="match status" value="1"/>
</dbReference>
<dbReference type="Gene3D" id="3.30.54.20">
    <property type="match status" value="1"/>
</dbReference>
<dbReference type="Gene3D" id="3.30.930.10">
    <property type="entry name" value="Bira Bifunctional Protein, Domain 2"/>
    <property type="match status" value="1"/>
</dbReference>
<dbReference type="Gene3D" id="3.30.980.10">
    <property type="entry name" value="Threonyl-trna Synthetase, Chain A, domain 2"/>
    <property type="match status" value="1"/>
</dbReference>
<dbReference type="HAMAP" id="MF_00036_B">
    <property type="entry name" value="Ala_tRNA_synth_B"/>
    <property type="match status" value="1"/>
</dbReference>
<dbReference type="InterPro" id="IPR045864">
    <property type="entry name" value="aa-tRNA-synth_II/BPL/LPL"/>
</dbReference>
<dbReference type="InterPro" id="IPR002318">
    <property type="entry name" value="Ala-tRNA-lgiase_IIc"/>
</dbReference>
<dbReference type="InterPro" id="IPR018162">
    <property type="entry name" value="Ala-tRNA-ligase_IIc_anticod-bd"/>
</dbReference>
<dbReference type="InterPro" id="IPR018165">
    <property type="entry name" value="Ala-tRNA-synth_IIc_core"/>
</dbReference>
<dbReference type="InterPro" id="IPR018164">
    <property type="entry name" value="Ala-tRNA-synth_IIc_N"/>
</dbReference>
<dbReference type="InterPro" id="IPR050058">
    <property type="entry name" value="Ala-tRNA_ligase"/>
</dbReference>
<dbReference type="InterPro" id="IPR023033">
    <property type="entry name" value="Ala_tRNA_ligase_euk/bac"/>
</dbReference>
<dbReference type="InterPro" id="IPR018163">
    <property type="entry name" value="Thr/Ala-tRNA-synth_IIc_edit"/>
</dbReference>
<dbReference type="InterPro" id="IPR009000">
    <property type="entry name" value="Transl_B-barrel_sf"/>
</dbReference>
<dbReference type="InterPro" id="IPR012947">
    <property type="entry name" value="tRNA_SAD"/>
</dbReference>
<dbReference type="NCBIfam" id="TIGR00344">
    <property type="entry name" value="alaS"/>
    <property type="match status" value="1"/>
</dbReference>
<dbReference type="PANTHER" id="PTHR11777:SF9">
    <property type="entry name" value="ALANINE--TRNA LIGASE, CYTOPLASMIC"/>
    <property type="match status" value="1"/>
</dbReference>
<dbReference type="PANTHER" id="PTHR11777">
    <property type="entry name" value="ALANYL-TRNA SYNTHETASE"/>
    <property type="match status" value="1"/>
</dbReference>
<dbReference type="Pfam" id="PF01411">
    <property type="entry name" value="tRNA-synt_2c"/>
    <property type="match status" value="1"/>
</dbReference>
<dbReference type="Pfam" id="PF07973">
    <property type="entry name" value="tRNA_SAD"/>
    <property type="match status" value="1"/>
</dbReference>
<dbReference type="PRINTS" id="PR00980">
    <property type="entry name" value="TRNASYNTHALA"/>
</dbReference>
<dbReference type="SMART" id="SM00863">
    <property type="entry name" value="tRNA_SAD"/>
    <property type="match status" value="1"/>
</dbReference>
<dbReference type="SUPFAM" id="SSF55681">
    <property type="entry name" value="Class II aaRS and biotin synthetases"/>
    <property type="match status" value="1"/>
</dbReference>
<dbReference type="SUPFAM" id="SSF101353">
    <property type="entry name" value="Putative anticodon-binding domain of alanyl-tRNA synthetase (AlaRS)"/>
    <property type="match status" value="1"/>
</dbReference>
<dbReference type="SUPFAM" id="SSF55186">
    <property type="entry name" value="ThrRS/AlaRS common domain"/>
    <property type="match status" value="1"/>
</dbReference>
<dbReference type="SUPFAM" id="SSF50447">
    <property type="entry name" value="Translation proteins"/>
    <property type="match status" value="1"/>
</dbReference>
<dbReference type="PROSITE" id="PS50860">
    <property type="entry name" value="AA_TRNA_LIGASE_II_ALA"/>
    <property type="match status" value="1"/>
</dbReference>
<comment type="function">
    <text evidence="1">Catalyzes the attachment of alanine to tRNA(Ala) in a two-step reaction: alanine is first activated by ATP to form Ala-AMP and then transferred to the acceptor end of tRNA(Ala). Also edits incorrectly charged Ser-tRNA(Ala) and Gly-tRNA(Ala) via its editing domain.</text>
</comment>
<comment type="catalytic activity">
    <reaction evidence="1">
        <text>tRNA(Ala) + L-alanine + ATP = L-alanyl-tRNA(Ala) + AMP + diphosphate</text>
        <dbReference type="Rhea" id="RHEA:12540"/>
        <dbReference type="Rhea" id="RHEA-COMP:9657"/>
        <dbReference type="Rhea" id="RHEA-COMP:9923"/>
        <dbReference type="ChEBI" id="CHEBI:30616"/>
        <dbReference type="ChEBI" id="CHEBI:33019"/>
        <dbReference type="ChEBI" id="CHEBI:57972"/>
        <dbReference type="ChEBI" id="CHEBI:78442"/>
        <dbReference type="ChEBI" id="CHEBI:78497"/>
        <dbReference type="ChEBI" id="CHEBI:456215"/>
        <dbReference type="EC" id="6.1.1.7"/>
    </reaction>
</comment>
<comment type="cofactor">
    <cofactor evidence="1">
        <name>Zn(2+)</name>
        <dbReference type="ChEBI" id="CHEBI:29105"/>
    </cofactor>
    <text evidence="1">Binds 1 zinc ion per subunit.</text>
</comment>
<comment type="subcellular location">
    <subcellularLocation>
        <location evidence="1">Cytoplasm</location>
    </subcellularLocation>
</comment>
<comment type="domain">
    <text evidence="1">Consists of three domains; the N-terminal catalytic domain, the editing domain and the C-terminal C-Ala domain. The editing domain removes incorrectly charged amino acids, while the C-Ala domain, along with tRNA(Ala), serves as a bridge to cooperatively bring together the editing and aminoacylation centers thus stimulating deacylation of misacylated tRNAs.</text>
</comment>
<comment type="similarity">
    <text evidence="1">Belongs to the class-II aminoacyl-tRNA synthetase family.</text>
</comment>
<accession>Q5PBJ0</accession>